<feature type="chain" id="PRO_0000185888" description="Glutathione S-transferase omega-2">
    <location>
        <begin position="1"/>
        <end position="243"/>
    </location>
</feature>
<feature type="domain" description="GST N-terminal">
    <location>
        <begin position="22"/>
        <end position="101"/>
    </location>
</feature>
<feature type="domain" description="GST C-terminal">
    <location>
        <begin position="106"/>
        <end position="231"/>
    </location>
</feature>
<feature type="active site" description="Nucleophile">
    <location>
        <position position="32"/>
    </location>
</feature>
<feature type="binding site" evidence="3">
    <location>
        <position position="59"/>
    </location>
    <ligand>
        <name>glutathione</name>
        <dbReference type="ChEBI" id="CHEBI:57925"/>
    </ligand>
</feature>
<feature type="binding site" evidence="3">
    <location>
        <position position="72"/>
    </location>
    <ligand>
        <name>glutathione</name>
        <dbReference type="ChEBI" id="CHEBI:57925"/>
    </ligand>
</feature>
<feature type="binding site" evidence="3">
    <location>
        <begin position="85"/>
        <end position="86"/>
    </location>
    <ligand>
        <name>glutathione</name>
        <dbReference type="ChEBI" id="CHEBI:57925"/>
    </ligand>
</feature>
<feature type="splice variant" id="VSP_045267" description="In isoform 3." evidence="5">
    <location>
        <begin position="1"/>
        <end position="28"/>
    </location>
</feature>
<feature type="splice variant" id="VSP_042567" description="In isoform 2." evidence="4">
    <location>
        <begin position="123"/>
        <end position="156"/>
    </location>
</feature>
<feature type="sequence variant" id="VAR_049492" description="In dbSNP:rs45582439.">
    <original>C</original>
    <variation>Y</variation>
    <location>
        <position position="130"/>
    </location>
</feature>
<feature type="sequence variant" id="VAR_016812" description="In dbSNP:rs156697." evidence="1">
    <original>N</original>
    <variation>D</variation>
    <location>
        <position position="142"/>
    </location>
</feature>
<feature type="mutagenesis site" description="Abolishes DHAR activity." evidence="3">
    <original>Y</original>
    <variation>A</variation>
    <location>
        <position position="34"/>
    </location>
</feature>
<feature type="sequence conflict" description="In Ref. 2; AAP47743." evidence="6" ref="2">
    <original>A</original>
    <variation>V</variation>
    <location>
        <position position="215"/>
    </location>
</feature>
<feature type="strand" evidence="7">
    <location>
        <begin position="24"/>
        <end position="28"/>
    </location>
</feature>
<feature type="helix" evidence="7">
    <location>
        <begin position="33"/>
        <end position="44"/>
    </location>
</feature>
<feature type="strand" evidence="7">
    <location>
        <begin position="49"/>
        <end position="54"/>
    </location>
</feature>
<feature type="strand" evidence="7">
    <location>
        <begin position="56"/>
        <end position="58"/>
    </location>
</feature>
<feature type="helix" evidence="7">
    <location>
        <begin position="61"/>
        <end position="65"/>
    </location>
</feature>
<feature type="strand" evidence="7">
    <location>
        <begin position="74"/>
        <end position="76"/>
    </location>
</feature>
<feature type="strand" evidence="8">
    <location>
        <begin position="82"/>
        <end position="85"/>
    </location>
</feature>
<feature type="helix" evidence="7">
    <location>
        <begin position="86"/>
        <end position="96"/>
    </location>
</feature>
<feature type="helix" evidence="7">
    <location>
        <begin position="107"/>
        <end position="119"/>
    </location>
</feature>
<feature type="turn" evidence="7">
    <location>
        <begin position="120"/>
        <end position="122"/>
    </location>
</feature>
<feature type="helix" evidence="7">
    <location>
        <begin position="123"/>
        <end position="136"/>
    </location>
</feature>
<feature type="helix" evidence="7">
    <location>
        <begin position="141"/>
        <end position="161"/>
    </location>
</feature>
<feature type="strand" evidence="7">
    <location>
        <begin position="168"/>
        <end position="170"/>
    </location>
</feature>
<feature type="helix" evidence="7">
    <location>
        <begin position="173"/>
        <end position="183"/>
    </location>
</feature>
<feature type="helix" evidence="7">
    <location>
        <begin position="185"/>
        <end position="188"/>
    </location>
</feature>
<feature type="helix" evidence="7">
    <location>
        <begin position="191"/>
        <end position="194"/>
    </location>
</feature>
<feature type="helix" evidence="7">
    <location>
        <begin position="198"/>
        <end position="208"/>
    </location>
</feature>
<feature type="helix" evidence="7">
    <location>
        <begin position="211"/>
        <end position="216"/>
    </location>
</feature>
<feature type="helix" evidence="7">
    <location>
        <begin position="220"/>
        <end position="231"/>
    </location>
</feature>
<feature type="helix" evidence="7">
    <location>
        <begin position="235"/>
        <end position="238"/>
    </location>
</feature>
<dbReference type="EC" id="2.5.1.18" evidence="2 3"/>
<dbReference type="EC" id="1.8.5.1" evidence="2 3"/>
<dbReference type="EC" id="1.20.4.2" evidence="2"/>
<dbReference type="EMBL" id="AY350731">
    <property type="protein sequence ID" value="AAR02452.1"/>
    <property type="molecule type" value="mRNA"/>
</dbReference>
<dbReference type="EMBL" id="AY209189">
    <property type="protein sequence ID" value="AAP47743.1"/>
    <property type="molecule type" value="mRNA"/>
</dbReference>
<dbReference type="EMBL" id="AK291886">
    <property type="protein sequence ID" value="BAF84575.1"/>
    <property type="molecule type" value="mRNA"/>
</dbReference>
<dbReference type="EMBL" id="AK296266">
    <property type="protein sequence ID" value="BAG58978.1"/>
    <property type="molecule type" value="mRNA"/>
</dbReference>
<dbReference type="EMBL" id="AL139341">
    <property type="status" value="NOT_ANNOTATED_CDS"/>
    <property type="molecule type" value="Genomic_DNA"/>
</dbReference>
<dbReference type="EMBL" id="AL162742">
    <property type="status" value="NOT_ANNOTATED_CDS"/>
    <property type="molecule type" value="Genomic_DNA"/>
</dbReference>
<dbReference type="EMBL" id="CH471066">
    <property type="protein sequence ID" value="EAW49600.1"/>
    <property type="molecule type" value="Genomic_DNA"/>
</dbReference>
<dbReference type="EMBL" id="BC046194">
    <property type="status" value="NOT_ANNOTATED_CDS"/>
    <property type="molecule type" value="mRNA"/>
</dbReference>
<dbReference type="EMBL" id="BC056918">
    <property type="protein sequence ID" value="AAH56918.1"/>
    <property type="molecule type" value="mRNA"/>
</dbReference>
<dbReference type="EMBL" id="AY191318">
    <property type="protein sequence ID" value="AAO23573.1"/>
    <property type="molecule type" value="mRNA"/>
</dbReference>
<dbReference type="CCDS" id="CCDS53574.1">
    <molecule id="Q9H4Y5-2"/>
</dbReference>
<dbReference type="CCDS" id="CCDS53575.1">
    <molecule id="Q9H4Y5-3"/>
</dbReference>
<dbReference type="CCDS" id="CCDS7556.1">
    <molecule id="Q9H4Y5-1"/>
</dbReference>
<dbReference type="RefSeq" id="NP_001177942.1">
    <molecule id="Q9H4Y5-2"/>
    <property type="nucleotide sequence ID" value="NM_001191013.2"/>
</dbReference>
<dbReference type="RefSeq" id="NP_001177943.1">
    <molecule id="Q9H4Y5-3"/>
    <property type="nucleotide sequence ID" value="NM_001191014.2"/>
</dbReference>
<dbReference type="RefSeq" id="NP_001177944.1">
    <property type="nucleotide sequence ID" value="NM_001191015.1"/>
</dbReference>
<dbReference type="RefSeq" id="NP_899062.1">
    <molecule id="Q9H4Y5-1"/>
    <property type="nucleotide sequence ID" value="NM_183239.2"/>
</dbReference>
<dbReference type="RefSeq" id="XP_011537572.1">
    <property type="nucleotide sequence ID" value="XM_011539270.2"/>
</dbReference>
<dbReference type="PDB" id="3Q18">
    <property type="method" value="X-ray"/>
    <property type="resolution" value="1.70 A"/>
    <property type="chains" value="A/B=1-239"/>
</dbReference>
<dbReference type="PDB" id="3Q19">
    <property type="method" value="X-ray"/>
    <property type="resolution" value="1.90 A"/>
    <property type="chains" value="A/B=1-239"/>
</dbReference>
<dbReference type="PDB" id="3QAG">
    <property type="method" value="X-ray"/>
    <property type="resolution" value="2.00 A"/>
    <property type="chains" value="A=1-239"/>
</dbReference>
<dbReference type="PDBsum" id="3Q18"/>
<dbReference type="PDBsum" id="3Q19"/>
<dbReference type="PDBsum" id="3QAG"/>
<dbReference type="SMR" id="Q9H4Y5"/>
<dbReference type="BioGRID" id="125638">
    <property type="interactions" value="28"/>
</dbReference>
<dbReference type="FunCoup" id="Q9H4Y5">
    <property type="interactions" value="456"/>
</dbReference>
<dbReference type="IntAct" id="Q9H4Y5">
    <property type="interactions" value="17"/>
</dbReference>
<dbReference type="STRING" id="9606.ENSP00000345023"/>
<dbReference type="ChEMBL" id="CHEMBL2161"/>
<dbReference type="DrugBank" id="DB00143">
    <property type="generic name" value="Glutathione"/>
</dbReference>
<dbReference type="iPTMnet" id="Q9H4Y5"/>
<dbReference type="PhosphoSitePlus" id="Q9H4Y5"/>
<dbReference type="BioMuta" id="GSTO2"/>
<dbReference type="DMDM" id="34922124"/>
<dbReference type="jPOST" id="Q9H4Y5"/>
<dbReference type="MassIVE" id="Q9H4Y5"/>
<dbReference type="PaxDb" id="9606-ENSP00000345023"/>
<dbReference type="PeptideAtlas" id="Q9H4Y5"/>
<dbReference type="ProteomicsDB" id="63249"/>
<dbReference type="ProteomicsDB" id="80881">
    <molecule id="Q9H4Y5-1"/>
</dbReference>
<dbReference type="ProteomicsDB" id="80882">
    <molecule id="Q9H4Y5-2"/>
</dbReference>
<dbReference type="Antibodypedia" id="31611">
    <property type="antibodies" value="315 antibodies from 29 providers"/>
</dbReference>
<dbReference type="DNASU" id="119391"/>
<dbReference type="Ensembl" id="ENST00000338595.7">
    <molecule id="Q9H4Y5-1"/>
    <property type="protein sequence ID" value="ENSP00000345023.1"/>
    <property type="gene ID" value="ENSG00000065621.15"/>
</dbReference>
<dbReference type="Ensembl" id="ENST00000369707.2">
    <molecule id="Q9H4Y5-3"/>
    <property type="protein sequence ID" value="ENSP00000358721.1"/>
    <property type="gene ID" value="ENSG00000065621.15"/>
</dbReference>
<dbReference type="Ensembl" id="ENST00000450629.6">
    <molecule id="Q9H4Y5-2"/>
    <property type="protein sequence ID" value="ENSP00000390986.2"/>
    <property type="gene ID" value="ENSG00000065621.15"/>
</dbReference>
<dbReference type="GeneID" id="119391"/>
<dbReference type="KEGG" id="hsa:119391"/>
<dbReference type="MANE-Select" id="ENST00000338595.7">
    <property type="protein sequence ID" value="ENSP00000345023.1"/>
    <property type="RefSeq nucleotide sequence ID" value="NM_183239.2"/>
    <property type="RefSeq protein sequence ID" value="NP_899062.1"/>
</dbReference>
<dbReference type="UCSC" id="uc001kyb.4">
    <molecule id="Q9H4Y5-1"/>
    <property type="organism name" value="human"/>
</dbReference>
<dbReference type="AGR" id="HGNC:23064"/>
<dbReference type="CTD" id="119391"/>
<dbReference type="DisGeNET" id="119391"/>
<dbReference type="GeneCards" id="GSTO2"/>
<dbReference type="HGNC" id="HGNC:23064">
    <property type="gene designation" value="GSTO2"/>
</dbReference>
<dbReference type="HPA" id="ENSG00000065621">
    <property type="expression patterns" value="Tissue enhanced (testis)"/>
</dbReference>
<dbReference type="MIM" id="612314">
    <property type="type" value="gene"/>
</dbReference>
<dbReference type="neXtProt" id="NX_Q9H4Y5"/>
<dbReference type="OpenTargets" id="ENSG00000065621"/>
<dbReference type="PharmGKB" id="PA133787053"/>
<dbReference type="VEuPathDB" id="HostDB:ENSG00000065621"/>
<dbReference type="eggNOG" id="KOG0406">
    <property type="taxonomic scope" value="Eukaryota"/>
</dbReference>
<dbReference type="GeneTree" id="ENSGT00940000162030"/>
<dbReference type="HOGENOM" id="CLU_011226_9_2_1"/>
<dbReference type="InParanoid" id="Q9H4Y5"/>
<dbReference type="OMA" id="LDDTYPG"/>
<dbReference type="OrthoDB" id="4951845at2759"/>
<dbReference type="PAN-GO" id="Q9H4Y5">
    <property type="GO annotations" value="5 GO annotations based on evolutionary models"/>
</dbReference>
<dbReference type="PhylomeDB" id="Q9H4Y5"/>
<dbReference type="TreeFam" id="TF105325"/>
<dbReference type="BRENDA" id="1.8.5.1">
    <property type="organism ID" value="2681"/>
</dbReference>
<dbReference type="BRENDA" id="2.5.1.18">
    <property type="organism ID" value="2681"/>
</dbReference>
<dbReference type="PathwayCommons" id="Q9H4Y5"/>
<dbReference type="Reactome" id="R-HSA-156590">
    <property type="pathway name" value="Glutathione conjugation"/>
</dbReference>
<dbReference type="Reactome" id="R-HSA-196836">
    <property type="pathway name" value="Vitamin C (ascorbate) metabolism"/>
</dbReference>
<dbReference type="SignaLink" id="Q9H4Y5"/>
<dbReference type="BioGRID-ORCS" id="119391">
    <property type="hits" value="12 hits in 1154 CRISPR screens"/>
</dbReference>
<dbReference type="CD-CODE" id="91857CE7">
    <property type="entry name" value="Nucleolus"/>
</dbReference>
<dbReference type="ChiTaRS" id="GSTO2">
    <property type="organism name" value="human"/>
</dbReference>
<dbReference type="EvolutionaryTrace" id="Q9H4Y5"/>
<dbReference type="GeneWiki" id="GSTO2"/>
<dbReference type="GenomeRNAi" id="119391"/>
<dbReference type="Pharos" id="Q9H4Y5">
    <property type="development level" value="Tbio"/>
</dbReference>
<dbReference type="PRO" id="PR:Q9H4Y5"/>
<dbReference type="Proteomes" id="UP000005640">
    <property type="component" value="Chromosome 10"/>
</dbReference>
<dbReference type="RNAct" id="Q9H4Y5">
    <property type="molecule type" value="protein"/>
</dbReference>
<dbReference type="Bgee" id="ENSG00000065621">
    <property type="expression patterns" value="Expressed in body of pancreas and 149 other cell types or tissues"/>
</dbReference>
<dbReference type="GO" id="GO:0005737">
    <property type="term" value="C:cytoplasm"/>
    <property type="evidence" value="ECO:0000318"/>
    <property type="project" value="GO_Central"/>
</dbReference>
<dbReference type="GO" id="GO:0005829">
    <property type="term" value="C:cytosol"/>
    <property type="evidence" value="ECO:0000304"/>
    <property type="project" value="Reactome"/>
</dbReference>
<dbReference type="GO" id="GO:0070062">
    <property type="term" value="C:extracellular exosome"/>
    <property type="evidence" value="ECO:0007005"/>
    <property type="project" value="UniProtKB"/>
</dbReference>
<dbReference type="GO" id="GO:0045174">
    <property type="term" value="F:glutathione dehydrogenase (ascorbate) activity"/>
    <property type="evidence" value="ECO:0000314"/>
    <property type="project" value="UniProtKB"/>
</dbReference>
<dbReference type="GO" id="GO:0004364">
    <property type="term" value="F:glutathione transferase activity"/>
    <property type="evidence" value="ECO:0000318"/>
    <property type="project" value="GO_Central"/>
</dbReference>
<dbReference type="GO" id="GO:0042802">
    <property type="term" value="F:identical protein binding"/>
    <property type="evidence" value="ECO:0000353"/>
    <property type="project" value="IntAct"/>
</dbReference>
<dbReference type="GO" id="GO:0050610">
    <property type="term" value="F:methylarsonate reductase activity"/>
    <property type="evidence" value="ECO:0007669"/>
    <property type="project" value="UniProtKB-EC"/>
</dbReference>
<dbReference type="GO" id="GO:0016491">
    <property type="term" value="F:oxidoreductase activity"/>
    <property type="evidence" value="ECO:0000314"/>
    <property type="project" value="UniProtKB"/>
</dbReference>
<dbReference type="GO" id="GO:0071243">
    <property type="term" value="P:cellular response to arsenic-containing substance"/>
    <property type="evidence" value="ECO:0000314"/>
    <property type="project" value="UniProtKB"/>
</dbReference>
<dbReference type="GO" id="GO:0006749">
    <property type="term" value="P:glutathione metabolic process"/>
    <property type="evidence" value="ECO:0000318"/>
    <property type="project" value="GO_Central"/>
</dbReference>
<dbReference type="GO" id="GO:0019852">
    <property type="term" value="P:L-ascorbic acid metabolic process"/>
    <property type="evidence" value="ECO:0000314"/>
    <property type="project" value="UniProtKB"/>
</dbReference>
<dbReference type="GO" id="GO:0006805">
    <property type="term" value="P:xenobiotic metabolic process"/>
    <property type="evidence" value="ECO:0000314"/>
    <property type="project" value="UniProtKB"/>
</dbReference>
<dbReference type="CDD" id="cd03184">
    <property type="entry name" value="GST_C_Omega"/>
    <property type="match status" value="1"/>
</dbReference>
<dbReference type="FunFam" id="3.40.30.10:FF:000075">
    <property type="entry name" value="Glutathione S-transferase omega-1"/>
    <property type="match status" value="1"/>
</dbReference>
<dbReference type="FunFam" id="1.20.1050.10:FF:000100">
    <property type="entry name" value="Glutathione S-transferase omega-2"/>
    <property type="match status" value="1"/>
</dbReference>
<dbReference type="Gene3D" id="1.20.1050.10">
    <property type="match status" value="1"/>
</dbReference>
<dbReference type="Gene3D" id="3.40.30.10">
    <property type="entry name" value="Glutaredoxin"/>
    <property type="match status" value="1"/>
</dbReference>
<dbReference type="InterPro" id="IPR010987">
    <property type="entry name" value="Glutathione-S-Trfase_C-like"/>
</dbReference>
<dbReference type="InterPro" id="IPR036282">
    <property type="entry name" value="Glutathione-S-Trfase_C_sf"/>
</dbReference>
<dbReference type="InterPro" id="IPR040079">
    <property type="entry name" value="Glutathione_S-Trfase"/>
</dbReference>
<dbReference type="InterPro" id="IPR004045">
    <property type="entry name" value="Glutathione_S-Trfase_N"/>
</dbReference>
<dbReference type="InterPro" id="IPR005442">
    <property type="entry name" value="GST_omega"/>
</dbReference>
<dbReference type="InterPro" id="IPR050983">
    <property type="entry name" value="GST_Omega/HSP26"/>
</dbReference>
<dbReference type="InterPro" id="IPR036249">
    <property type="entry name" value="Thioredoxin-like_sf"/>
</dbReference>
<dbReference type="PANTHER" id="PTHR43968">
    <property type="match status" value="1"/>
</dbReference>
<dbReference type="PANTHER" id="PTHR43968:SF4">
    <property type="entry name" value="GLUTATHIONE S-TRANSFERASE OMEGA-2"/>
    <property type="match status" value="1"/>
</dbReference>
<dbReference type="Pfam" id="PF13417">
    <property type="entry name" value="GST_N_3"/>
    <property type="match status" value="1"/>
</dbReference>
<dbReference type="PRINTS" id="PR01625">
    <property type="entry name" value="GSTRNSFRASEO"/>
</dbReference>
<dbReference type="SFLD" id="SFLDS00019">
    <property type="entry name" value="Glutathione_Transferase_(cytos"/>
    <property type="match status" value="1"/>
</dbReference>
<dbReference type="SFLD" id="SFLDG00358">
    <property type="entry name" value="Main_(cytGST)"/>
    <property type="match status" value="1"/>
</dbReference>
<dbReference type="SUPFAM" id="SSF47616">
    <property type="entry name" value="GST C-terminal domain-like"/>
    <property type="match status" value="1"/>
</dbReference>
<dbReference type="SUPFAM" id="SSF52833">
    <property type="entry name" value="Thioredoxin-like"/>
    <property type="match status" value="1"/>
</dbReference>
<dbReference type="PROSITE" id="PS50405">
    <property type="entry name" value="GST_CTER"/>
    <property type="match status" value="1"/>
</dbReference>
<dbReference type="PROSITE" id="PS50404">
    <property type="entry name" value="GST_NTER"/>
    <property type="match status" value="1"/>
</dbReference>
<comment type="function">
    <text evidence="2">Exhibits glutathione-dependent thiol transferase activity. Has high dehydroascorbate reductase activity and may contribute to the recycling of ascorbic acid. Participates in the biotransformation of inorganic arsenic and reduces monomethylarsonic acid (MMA).</text>
</comment>
<comment type="catalytic activity">
    <reaction evidence="2 3">
        <text>RX + glutathione = an S-substituted glutathione + a halide anion + H(+)</text>
        <dbReference type="Rhea" id="RHEA:16437"/>
        <dbReference type="ChEBI" id="CHEBI:15378"/>
        <dbReference type="ChEBI" id="CHEBI:16042"/>
        <dbReference type="ChEBI" id="CHEBI:17792"/>
        <dbReference type="ChEBI" id="CHEBI:57925"/>
        <dbReference type="ChEBI" id="CHEBI:90779"/>
        <dbReference type="EC" id="2.5.1.18"/>
    </reaction>
</comment>
<comment type="catalytic activity">
    <reaction evidence="2 3">
        <text>L-dehydroascorbate + 2 glutathione = glutathione disulfide + L-ascorbate</text>
        <dbReference type="Rhea" id="RHEA:24424"/>
        <dbReference type="ChEBI" id="CHEBI:38290"/>
        <dbReference type="ChEBI" id="CHEBI:57925"/>
        <dbReference type="ChEBI" id="CHEBI:58297"/>
        <dbReference type="ChEBI" id="CHEBI:58539"/>
        <dbReference type="EC" id="1.8.5.1"/>
    </reaction>
</comment>
<comment type="catalytic activity">
    <reaction evidence="2">
        <text>methylarsonate + 2 glutathione + H(+) = methylarsonous acid + glutathione disulfide + H2O</text>
        <dbReference type="Rhea" id="RHEA:15969"/>
        <dbReference type="ChEBI" id="CHEBI:15377"/>
        <dbReference type="ChEBI" id="CHEBI:15378"/>
        <dbReference type="ChEBI" id="CHEBI:17826"/>
        <dbReference type="ChEBI" id="CHEBI:33409"/>
        <dbReference type="ChEBI" id="CHEBI:57925"/>
        <dbReference type="ChEBI" id="CHEBI:58297"/>
        <dbReference type="EC" id="1.20.4.2"/>
    </reaction>
</comment>
<comment type="biophysicochemical properties">
    <phDependence>
        <text evidence="2">Optimum pH is 7.5.</text>
    </phDependence>
</comment>
<comment type="interaction">
    <interactant intactId="EBI-10194609">
        <id>Q9H4Y5</id>
    </interactant>
    <interactant intactId="EBI-947242">
        <id>P28676</id>
        <label>GCA</label>
    </interactant>
    <organismsDiffer>false</organismsDiffer>
    <experiments>3</experiments>
</comment>
<comment type="interaction">
    <interactant intactId="EBI-10194609">
        <id>Q9H4Y5</id>
    </interactant>
    <interactant intactId="EBI-10194609">
        <id>Q9H4Y5</id>
        <label>GSTO2</label>
    </interactant>
    <organismsDiffer>false</organismsDiffer>
    <experiments>8</experiments>
</comment>
<comment type="interaction">
    <interactant intactId="EBI-10194609">
        <id>Q9H4Y5</id>
    </interactant>
    <interactant intactId="EBI-1752118">
        <id>P31273</id>
        <label>HOXC8</label>
    </interactant>
    <organismsDiffer>false</organismsDiffer>
    <experiments>3</experiments>
</comment>
<comment type="interaction">
    <interactant intactId="EBI-10194609">
        <id>Q9H4Y5</id>
    </interactant>
    <interactant intactId="EBI-6509505">
        <id>Q0VD86</id>
        <label>INCA1</label>
    </interactant>
    <organismsDiffer>false</organismsDiffer>
    <experiments>3</experiments>
</comment>
<comment type="interaction">
    <interactant intactId="EBI-10194609">
        <id>Q9H4Y5</id>
    </interactant>
    <interactant intactId="EBI-6426253">
        <id>Q6JEL2</id>
        <label>KLHL10</label>
    </interactant>
    <organismsDiffer>false</organismsDiffer>
    <experiments>3</experiments>
</comment>
<comment type="interaction">
    <interactant intactId="EBI-10194609">
        <id>Q9H4Y5</id>
    </interactant>
    <interactant intactId="EBI-10307610">
        <id>Q9H6H2</id>
        <label>MUM1</label>
    </interactant>
    <organismsDiffer>false</organismsDiffer>
    <experiments>3</experiments>
</comment>
<comment type="interaction">
    <interactant intactId="EBI-10194609">
        <id>Q9H4Y5</id>
    </interactant>
    <interactant intactId="EBI-741158">
        <id>Q96HA8</id>
        <label>NTAQ1</label>
    </interactant>
    <organismsDiffer>false</organismsDiffer>
    <experiments>3</experiments>
</comment>
<comment type="interaction">
    <interactant intactId="EBI-10194609">
        <id>Q9H4Y5</id>
    </interactant>
    <interactant intactId="EBI-357275">
        <id>Q99471</id>
        <label>PFDN5</label>
    </interactant>
    <organismsDiffer>false</organismsDiffer>
    <experiments>3</experiments>
</comment>
<comment type="interaction">
    <interactant intactId="EBI-10194609">
        <id>Q9H4Y5</id>
    </interactant>
    <interactant intactId="EBI-1055079">
        <id>O15160</id>
        <label>POLR1C</label>
    </interactant>
    <organismsDiffer>false</organismsDiffer>
    <experiments>3</experiments>
</comment>
<comment type="interaction">
    <interactant intactId="EBI-10194609">
        <id>Q9H4Y5</id>
    </interactant>
    <interactant intactId="EBI-355653">
        <id>Q92922</id>
        <label>SMARCC1</label>
    </interactant>
    <organismsDiffer>false</organismsDiffer>
    <experiments>3</experiments>
</comment>
<comment type="interaction">
    <interactant intactId="EBI-10194609">
        <id>Q9H4Y5</id>
    </interactant>
    <interactant intactId="EBI-347351">
        <id>P05549</id>
        <label>TFAP2A</label>
    </interactant>
    <organismsDiffer>false</organismsDiffer>
    <experiments>4</experiments>
</comment>
<comment type="interaction">
    <interactant intactId="EBI-10194609">
        <id>Q9H4Y5</id>
    </interactant>
    <interactant intactId="EBI-12194905">
        <id>P05549-5</id>
        <label>TFAP2A</label>
    </interactant>
    <organismsDiffer>false</organismsDiffer>
    <experiments>6</experiments>
</comment>
<comment type="alternative products">
    <event type="alternative splicing"/>
    <isoform>
        <id>Q9H4Y5-1</id>
        <name>1</name>
        <sequence type="displayed"/>
    </isoform>
    <isoform>
        <id>Q9H4Y5-2</id>
        <name>2</name>
        <sequence type="described" ref="VSP_042567"/>
    </isoform>
    <isoform>
        <id>Q9H4Y5-3</id>
        <name>3</name>
        <sequence type="described" ref="VSP_045267"/>
    </isoform>
</comment>
<comment type="tissue specificity">
    <text evidence="1">Expressed in a range of tissues, including the liver, kidney, skeletal muscle and prostate. Strongest expression in the testis.</text>
</comment>
<comment type="similarity">
    <text evidence="6">Belongs to the GST superfamily. Omega family.</text>
</comment>
<protein>
    <recommendedName>
        <fullName>Glutathione S-transferase omega-2</fullName>
        <shortName>GSTO-2</shortName>
        <ecNumber evidence="2 3">2.5.1.18</ecNumber>
    </recommendedName>
    <alternativeName>
        <fullName>Glutathione S-transferase omega 2-2</fullName>
        <shortName>GSTO 2-2</shortName>
    </alternativeName>
    <alternativeName>
        <fullName>Glutathione-dependent dehydroascorbate reductase</fullName>
        <ecNumber evidence="2 3">1.8.5.1</ecNumber>
    </alternativeName>
    <alternativeName>
        <fullName>Monomethylarsonic acid reductase</fullName>
        <shortName>MMA(V) reductase</shortName>
        <ecNumber evidence="2">1.20.4.2</ecNumber>
    </alternativeName>
</protein>
<organism>
    <name type="scientific">Homo sapiens</name>
    <name type="common">Human</name>
    <dbReference type="NCBI Taxonomy" id="9606"/>
    <lineage>
        <taxon>Eukaryota</taxon>
        <taxon>Metazoa</taxon>
        <taxon>Chordata</taxon>
        <taxon>Craniata</taxon>
        <taxon>Vertebrata</taxon>
        <taxon>Euteleostomi</taxon>
        <taxon>Mammalia</taxon>
        <taxon>Eutheria</taxon>
        <taxon>Euarchontoglires</taxon>
        <taxon>Primates</taxon>
        <taxon>Haplorrhini</taxon>
        <taxon>Catarrhini</taxon>
        <taxon>Hominidae</taxon>
        <taxon>Homo</taxon>
    </lineage>
</organism>
<sequence length="243" mass="28254">MSGDATRTLGKGSQPPGPVPEGLIRIYSMRFCPYSHRTRLVLKAKDIRHEVVNINLRNKPEWYYTKHPFGHIPVLETSQCQLIYESVIACEYLDDAYPGRKLFPYDPYERARQKMLLELFCKVPHLTKECLVALRCGRECTNLKAALRQEFSNLEEILEYQNTTFFGGTCISMIDYLLWPWFERLDVYGILDCVSHTPALRLWISAMKWDPTVCALLMDKSIFQGFLNLYFQNNPNAFDFGLC</sequence>
<keyword id="KW-0002">3D-structure</keyword>
<keyword id="KW-0025">Alternative splicing</keyword>
<keyword id="KW-0560">Oxidoreductase</keyword>
<keyword id="KW-1267">Proteomics identification</keyword>
<keyword id="KW-1185">Reference proteome</keyword>
<keyword id="KW-0808">Transferase</keyword>
<proteinExistence type="evidence at protein level"/>
<name>GSTO2_HUMAN</name>
<evidence type="ECO:0000269" key="1">
    <source>
    </source>
</evidence>
<evidence type="ECO:0000269" key="2">
    <source>
    </source>
</evidence>
<evidence type="ECO:0000269" key="3">
    <source>
    </source>
</evidence>
<evidence type="ECO:0000303" key="4">
    <source>
    </source>
</evidence>
<evidence type="ECO:0000303" key="5">
    <source>
    </source>
</evidence>
<evidence type="ECO:0000305" key="6"/>
<evidence type="ECO:0007829" key="7">
    <source>
        <dbReference type="PDB" id="3Q18"/>
    </source>
</evidence>
<evidence type="ECO:0007829" key="8">
    <source>
        <dbReference type="PDB" id="3QAG"/>
    </source>
</evidence>
<accession>Q9H4Y5</accession>
<accession>A8K771</accession>
<accession>B4DJW6</accession>
<accession>E7ESD6</accession>
<accession>Q49TW5</accession>
<accession>Q5GM70</accession>
<accession>Q5JU15</accession>
<accession>Q86WP3</accession>
<gene>
    <name type="primary">GSTO2</name>
</gene>
<reference key="1">
    <citation type="submission" date="2003-07" db="EMBL/GenBank/DDBJ databases">
        <title>Cloning and characterization of human GSTO-2 gene.</title>
        <authorList>
            <person name="Wang L."/>
            <person name="Xie Y."/>
            <person name="Mao Y."/>
        </authorList>
    </citation>
    <scope>NUCLEOTIDE SEQUENCE [MRNA] (ISOFORM 1)</scope>
</reference>
<reference key="2">
    <citation type="submission" date="2003-01" db="EMBL/GenBank/DDBJ databases">
        <authorList>
            <person name="Xu J."/>
            <person name="Xie Y."/>
            <person name="Mao Y."/>
        </authorList>
    </citation>
    <scope>NUCLEOTIDE SEQUENCE [MRNA] (ISOFORM 1)</scope>
</reference>
<reference key="3">
    <citation type="journal article" date="2004" name="Nat. Genet.">
        <title>Complete sequencing and characterization of 21,243 full-length human cDNAs.</title>
        <authorList>
            <person name="Ota T."/>
            <person name="Suzuki Y."/>
            <person name="Nishikawa T."/>
            <person name="Otsuki T."/>
            <person name="Sugiyama T."/>
            <person name="Irie R."/>
            <person name="Wakamatsu A."/>
            <person name="Hayashi K."/>
            <person name="Sato H."/>
            <person name="Nagai K."/>
            <person name="Kimura K."/>
            <person name="Makita H."/>
            <person name="Sekine M."/>
            <person name="Obayashi M."/>
            <person name="Nishi T."/>
            <person name="Shibahara T."/>
            <person name="Tanaka T."/>
            <person name="Ishii S."/>
            <person name="Yamamoto J."/>
            <person name="Saito K."/>
            <person name="Kawai Y."/>
            <person name="Isono Y."/>
            <person name="Nakamura Y."/>
            <person name="Nagahari K."/>
            <person name="Murakami K."/>
            <person name="Yasuda T."/>
            <person name="Iwayanagi T."/>
            <person name="Wagatsuma M."/>
            <person name="Shiratori A."/>
            <person name="Sudo H."/>
            <person name="Hosoiri T."/>
            <person name="Kaku Y."/>
            <person name="Kodaira H."/>
            <person name="Kondo H."/>
            <person name="Sugawara M."/>
            <person name="Takahashi M."/>
            <person name="Kanda K."/>
            <person name="Yokoi T."/>
            <person name="Furuya T."/>
            <person name="Kikkawa E."/>
            <person name="Omura Y."/>
            <person name="Abe K."/>
            <person name="Kamihara K."/>
            <person name="Katsuta N."/>
            <person name="Sato K."/>
            <person name="Tanikawa M."/>
            <person name="Yamazaki M."/>
            <person name="Ninomiya K."/>
            <person name="Ishibashi T."/>
            <person name="Yamashita H."/>
            <person name="Murakawa K."/>
            <person name="Fujimori K."/>
            <person name="Tanai H."/>
            <person name="Kimata M."/>
            <person name="Watanabe M."/>
            <person name="Hiraoka S."/>
            <person name="Chiba Y."/>
            <person name="Ishida S."/>
            <person name="Ono Y."/>
            <person name="Takiguchi S."/>
            <person name="Watanabe S."/>
            <person name="Yosida M."/>
            <person name="Hotuta T."/>
            <person name="Kusano J."/>
            <person name="Kanehori K."/>
            <person name="Takahashi-Fujii A."/>
            <person name="Hara H."/>
            <person name="Tanase T.-O."/>
            <person name="Nomura Y."/>
            <person name="Togiya S."/>
            <person name="Komai F."/>
            <person name="Hara R."/>
            <person name="Takeuchi K."/>
            <person name="Arita M."/>
            <person name="Imose N."/>
            <person name="Musashino K."/>
            <person name="Yuuki H."/>
            <person name="Oshima A."/>
            <person name="Sasaki N."/>
            <person name="Aotsuka S."/>
            <person name="Yoshikawa Y."/>
            <person name="Matsunawa H."/>
            <person name="Ichihara T."/>
            <person name="Shiohata N."/>
            <person name="Sano S."/>
            <person name="Moriya S."/>
            <person name="Momiyama H."/>
            <person name="Satoh N."/>
            <person name="Takami S."/>
            <person name="Terashima Y."/>
            <person name="Suzuki O."/>
            <person name="Nakagawa S."/>
            <person name="Senoh A."/>
            <person name="Mizoguchi H."/>
            <person name="Goto Y."/>
            <person name="Shimizu F."/>
            <person name="Wakebe H."/>
            <person name="Hishigaki H."/>
            <person name="Watanabe T."/>
            <person name="Sugiyama A."/>
            <person name="Takemoto M."/>
            <person name="Kawakami B."/>
            <person name="Yamazaki M."/>
            <person name="Watanabe K."/>
            <person name="Kumagai A."/>
            <person name="Itakura S."/>
            <person name="Fukuzumi Y."/>
            <person name="Fujimori Y."/>
            <person name="Komiyama M."/>
            <person name="Tashiro H."/>
            <person name="Tanigami A."/>
            <person name="Fujiwara T."/>
            <person name="Ono T."/>
            <person name="Yamada K."/>
            <person name="Fujii Y."/>
            <person name="Ozaki K."/>
            <person name="Hirao M."/>
            <person name="Ohmori Y."/>
            <person name="Kawabata A."/>
            <person name="Hikiji T."/>
            <person name="Kobatake N."/>
            <person name="Inagaki H."/>
            <person name="Ikema Y."/>
            <person name="Okamoto S."/>
            <person name="Okitani R."/>
            <person name="Kawakami T."/>
            <person name="Noguchi S."/>
            <person name="Itoh T."/>
            <person name="Shigeta K."/>
            <person name="Senba T."/>
            <person name="Matsumura K."/>
            <person name="Nakajima Y."/>
            <person name="Mizuno T."/>
            <person name="Morinaga M."/>
            <person name="Sasaki M."/>
            <person name="Togashi T."/>
            <person name="Oyama M."/>
            <person name="Hata H."/>
            <person name="Watanabe M."/>
            <person name="Komatsu T."/>
            <person name="Mizushima-Sugano J."/>
            <person name="Satoh T."/>
            <person name="Shirai Y."/>
            <person name="Takahashi Y."/>
            <person name="Nakagawa K."/>
            <person name="Okumura K."/>
            <person name="Nagase T."/>
            <person name="Nomura N."/>
            <person name="Kikuchi H."/>
            <person name="Masuho Y."/>
            <person name="Yamashita R."/>
            <person name="Nakai K."/>
            <person name="Yada T."/>
            <person name="Nakamura Y."/>
            <person name="Ohara O."/>
            <person name="Isogai T."/>
            <person name="Sugano S."/>
        </authorList>
    </citation>
    <scope>NUCLEOTIDE SEQUENCE [LARGE SCALE MRNA] (ISOFORMS 1 AND 2)</scope>
    <source>
        <tissue>Skeletal muscle</tissue>
        <tissue>Thalamus</tissue>
    </source>
</reference>
<reference key="4">
    <citation type="journal article" date="2004" name="Nature">
        <title>The DNA sequence and comparative analysis of human chromosome 10.</title>
        <authorList>
            <person name="Deloukas P."/>
            <person name="Earthrowl M.E."/>
            <person name="Grafham D.V."/>
            <person name="Rubenfield M."/>
            <person name="French L."/>
            <person name="Steward C.A."/>
            <person name="Sims S.K."/>
            <person name="Jones M.C."/>
            <person name="Searle S."/>
            <person name="Scott C."/>
            <person name="Howe K."/>
            <person name="Hunt S.E."/>
            <person name="Andrews T.D."/>
            <person name="Gilbert J.G.R."/>
            <person name="Swarbreck D."/>
            <person name="Ashurst J.L."/>
            <person name="Taylor A."/>
            <person name="Battles J."/>
            <person name="Bird C.P."/>
            <person name="Ainscough R."/>
            <person name="Almeida J.P."/>
            <person name="Ashwell R.I.S."/>
            <person name="Ambrose K.D."/>
            <person name="Babbage A.K."/>
            <person name="Bagguley C.L."/>
            <person name="Bailey J."/>
            <person name="Banerjee R."/>
            <person name="Bates K."/>
            <person name="Beasley H."/>
            <person name="Bray-Allen S."/>
            <person name="Brown A.J."/>
            <person name="Brown J.Y."/>
            <person name="Burford D.C."/>
            <person name="Burrill W."/>
            <person name="Burton J."/>
            <person name="Cahill P."/>
            <person name="Camire D."/>
            <person name="Carter N.P."/>
            <person name="Chapman J.C."/>
            <person name="Clark S.Y."/>
            <person name="Clarke G."/>
            <person name="Clee C.M."/>
            <person name="Clegg S."/>
            <person name="Corby N."/>
            <person name="Coulson A."/>
            <person name="Dhami P."/>
            <person name="Dutta I."/>
            <person name="Dunn M."/>
            <person name="Faulkner L."/>
            <person name="Frankish A."/>
            <person name="Frankland J.A."/>
            <person name="Garner P."/>
            <person name="Garnett J."/>
            <person name="Gribble S."/>
            <person name="Griffiths C."/>
            <person name="Grocock R."/>
            <person name="Gustafson E."/>
            <person name="Hammond S."/>
            <person name="Harley J.L."/>
            <person name="Hart E."/>
            <person name="Heath P.D."/>
            <person name="Ho T.P."/>
            <person name="Hopkins B."/>
            <person name="Horne J."/>
            <person name="Howden P.J."/>
            <person name="Huckle E."/>
            <person name="Hynds C."/>
            <person name="Johnson C."/>
            <person name="Johnson D."/>
            <person name="Kana A."/>
            <person name="Kay M."/>
            <person name="Kimberley A.M."/>
            <person name="Kershaw J.K."/>
            <person name="Kokkinaki M."/>
            <person name="Laird G.K."/>
            <person name="Lawlor S."/>
            <person name="Lee H.M."/>
            <person name="Leongamornlert D.A."/>
            <person name="Laird G."/>
            <person name="Lloyd C."/>
            <person name="Lloyd D.M."/>
            <person name="Loveland J."/>
            <person name="Lovell J."/>
            <person name="McLaren S."/>
            <person name="McLay K.E."/>
            <person name="McMurray A."/>
            <person name="Mashreghi-Mohammadi M."/>
            <person name="Matthews L."/>
            <person name="Milne S."/>
            <person name="Nickerson T."/>
            <person name="Nguyen M."/>
            <person name="Overton-Larty E."/>
            <person name="Palmer S.A."/>
            <person name="Pearce A.V."/>
            <person name="Peck A.I."/>
            <person name="Pelan S."/>
            <person name="Phillimore B."/>
            <person name="Porter K."/>
            <person name="Rice C.M."/>
            <person name="Rogosin A."/>
            <person name="Ross M.T."/>
            <person name="Sarafidou T."/>
            <person name="Sehra H.K."/>
            <person name="Shownkeen R."/>
            <person name="Skuce C.D."/>
            <person name="Smith M."/>
            <person name="Standring L."/>
            <person name="Sycamore N."/>
            <person name="Tester J."/>
            <person name="Thorpe A."/>
            <person name="Torcasso W."/>
            <person name="Tracey A."/>
            <person name="Tromans A."/>
            <person name="Tsolas J."/>
            <person name="Wall M."/>
            <person name="Walsh J."/>
            <person name="Wang H."/>
            <person name="Weinstock K."/>
            <person name="West A.P."/>
            <person name="Willey D.L."/>
            <person name="Whitehead S.L."/>
            <person name="Wilming L."/>
            <person name="Wray P.W."/>
            <person name="Young L."/>
            <person name="Chen Y."/>
            <person name="Lovering R.C."/>
            <person name="Moschonas N.K."/>
            <person name="Siebert R."/>
            <person name="Fechtel K."/>
            <person name="Bentley D."/>
            <person name="Durbin R.M."/>
            <person name="Hubbard T."/>
            <person name="Doucette-Stamm L."/>
            <person name="Beck S."/>
            <person name="Smith D.R."/>
            <person name="Rogers J."/>
        </authorList>
    </citation>
    <scope>NUCLEOTIDE SEQUENCE [LARGE SCALE GENOMIC DNA]</scope>
</reference>
<reference key="5">
    <citation type="submission" date="2005-09" db="EMBL/GenBank/DDBJ databases">
        <authorList>
            <person name="Mural R.J."/>
            <person name="Istrail S."/>
            <person name="Sutton G."/>
            <person name="Florea L."/>
            <person name="Halpern A.L."/>
            <person name="Mobarry C.M."/>
            <person name="Lippert R."/>
            <person name="Walenz B."/>
            <person name="Shatkay H."/>
            <person name="Dew I."/>
            <person name="Miller J.R."/>
            <person name="Flanigan M.J."/>
            <person name="Edwards N.J."/>
            <person name="Bolanos R."/>
            <person name="Fasulo D."/>
            <person name="Halldorsson B.V."/>
            <person name="Hannenhalli S."/>
            <person name="Turner R."/>
            <person name="Yooseph S."/>
            <person name="Lu F."/>
            <person name="Nusskern D.R."/>
            <person name="Shue B.C."/>
            <person name="Zheng X.H."/>
            <person name="Zhong F."/>
            <person name="Delcher A.L."/>
            <person name="Huson D.H."/>
            <person name="Kravitz S.A."/>
            <person name="Mouchard L."/>
            <person name="Reinert K."/>
            <person name="Remington K.A."/>
            <person name="Clark A.G."/>
            <person name="Waterman M.S."/>
            <person name="Eichler E.E."/>
            <person name="Adams M.D."/>
            <person name="Hunkapiller M.W."/>
            <person name="Myers E.W."/>
            <person name="Venter J.C."/>
        </authorList>
    </citation>
    <scope>NUCLEOTIDE SEQUENCE [LARGE SCALE GENOMIC DNA]</scope>
</reference>
<reference key="6">
    <citation type="journal article" date="2004" name="Genome Res.">
        <title>The status, quality, and expansion of the NIH full-length cDNA project: the Mammalian Gene Collection (MGC).</title>
        <authorList>
            <consortium name="The MGC Project Team"/>
        </authorList>
    </citation>
    <scope>NUCLEOTIDE SEQUENCE [LARGE SCALE MRNA] (ISOFORMS 1 AND 3)</scope>
    <source>
        <tissue>Brain</tissue>
        <tissue>Pancreatic carcinoma</tissue>
    </source>
</reference>
<reference key="7">
    <citation type="journal article" date="2003" name="Pharmacogenetics">
        <title>Characterization of the human Omega class glutathione transferase genes and associated polymorphisms.</title>
        <authorList>
            <person name="Whitbread A.K."/>
            <person name="Tetlow N."/>
            <person name="Eyre H.J."/>
            <person name="Sutherland G.R."/>
            <person name="Board P.G."/>
        </authorList>
    </citation>
    <scope>NUCLEOTIDE SEQUENCE [MRNA] OF 3-243 (ISOFORM 1)</scope>
    <scope>VARIANT ASP-142</scope>
    <scope>TISSUE SPECIFICITY</scope>
    <source>
        <tissue>Testis</tissue>
    </source>
</reference>
<reference key="8">
    <citation type="journal article" date="2005" name="Pharmacogenet. Genomics">
        <title>Characterization of the monomethylarsonate reductase and dehydroascorbate reductase activities of Omega class glutathione transferase variants: implications for arsenic metabolism and the age-at-onset of Alzheimer's and Parkinson's diseases.</title>
        <authorList>
            <person name="Schmuck E.M."/>
            <person name="Board P.G."/>
            <person name="Whitbread A.K."/>
            <person name="Tetlow N."/>
            <person name="Cavanaugh J.A."/>
            <person name="Blackburn A.C."/>
            <person name="Masoumi A."/>
        </authorList>
    </citation>
    <scope>FUNCTION</scope>
    <scope>BIOPHYSICOCHEMICAL PROPERTIES</scope>
    <scope>CATALYTIC ACTIVITY</scope>
</reference>
<reference key="9">
    <citation type="journal article" date="2012" name="J. Mol. Biol.">
        <title>Structural insights into the dehydroascorbate reductase activity of human omega-class glutathione transferases.</title>
        <authorList>
            <person name="Zhou H."/>
            <person name="Brock J."/>
            <person name="Liu D."/>
            <person name="Board P.G."/>
            <person name="Oakley A.J."/>
        </authorList>
    </citation>
    <scope>X-RAY CRYSTALLOGRAPHY (1.7 ANGSTROMS) OF 1-239 ALONE AND IN COMPLEX WITH GLUTATHIONE</scope>
    <scope>CATALYTIC ACTIVITY</scope>
    <scope>MUTAGENESIS OF TYR-34</scope>
</reference>